<keyword id="KW-0903">Direct protein sequencing</keyword>
<keyword id="KW-0225">Disease variant</keyword>
<keyword id="KW-0256">Endoplasmic reticulum</keyword>
<keyword id="KW-0274">FAD</keyword>
<keyword id="KW-0285">Flavoprotein</keyword>
<keyword id="KW-0472">Membrane</keyword>
<keyword id="KW-0492">Microsome</keyword>
<keyword id="KW-0503">Monooxygenase</keyword>
<keyword id="KW-0521">NADP</keyword>
<keyword id="KW-0560">Oxidoreductase</keyword>
<keyword id="KW-0597">Phosphoprotein</keyword>
<keyword id="KW-1267">Proteomics identification</keyword>
<keyword id="KW-1185">Reference proteome</keyword>
<keyword id="KW-0812">Transmembrane</keyword>
<keyword id="KW-1133">Transmembrane helix</keyword>
<reference key="1">
    <citation type="journal article" date="1992" name="Proc. Natl. Acad. Sci. U.S.A.">
        <title>Molecular cloning of the flavin-containing monooxygenase (form II) cDNA from adult human liver.</title>
        <authorList>
            <person name="Lomri N."/>
            <person name="Gu Q."/>
            <person name="Cashman J.R."/>
        </authorList>
    </citation>
    <scope>NUCLEOTIDE SEQUENCE [MRNA]</scope>
    <source>
        <tissue>Liver</tissue>
    </source>
</reference>
<reference key="2">
    <citation type="journal article" date="1996" name="Eur. J. Biochem.">
        <title>Differential developmental and tissue-specific regulation of expression of the genes encoding three members of the flavin-containing monooxygenase family of man, FMO1, FMO3 and FM04.</title>
        <authorList>
            <person name="Dolphin C.T."/>
            <person name="Cullingford T.E."/>
            <person name="Shephard E.A."/>
            <person name="Smith R.L."/>
            <person name="Phillips I.R."/>
        </authorList>
    </citation>
    <scope>NUCLEOTIDE SEQUENCE [MRNA]</scope>
    <source>
        <tissue>Liver</tissue>
    </source>
</reference>
<reference key="3">
    <citation type="journal article" date="1997" name="Genomics">
        <title>Structural organization of the human flavin-containing monooxygenase 3 gene (FMO3), the favored candidate for fish-odor syndrome, determined directly from genomic DNA.</title>
        <authorList>
            <person name="Dolphin C.T."/>
            <person name="Riley J.H."/>
            <person name="Smith R.L."/>
            <person name="Shephard E.A."/>
            <person name="Phillips I.R."/>
        </authorList>
    </citation>
    <scope>NUCLEOTIDE SEQUENCE [GENOMIC DNA]</scope>
</reference>
<reference key="4">
    <citation type="submission" date="2005-01" db="EMBL/GenBank/DDBJ databases">
        <authorList>
            <consortium name="NIEHS SNPs program"/>
        </authorList>
    </citation>
    <scope>NUCLEOTIDE SEQUENCE [GENOMIC DNA]</scope>
    <scope>VARIANTS HIS-132; LYS-158; CYS-205; MET-257; ALA-277; GLY-308; PRO-360 AND GLN-362</scope>
</reference>
<reference key="5">
    <citation type="journal article" date="2004" name="Nat. Genet.">
        <title>Complete sequencing and characterization of 21,243 full-length human cDNAs.</title>
        <authorList>
            <person name="Ota T."/>
            <person name="Suzuki Y."/>
            <person name="Nishikawa T."/>
            <person name="Otsuki T."/>
            <person name="Sugiyama T."/>
            <person name="Irie R."/>
            <person name="Wakamatsu A."/>
            <person name="Hayashi K."/>
            <person name="Sato H."/>
            <person name="Nagai K."/>
            <person name="Kimura K."/>
            <person name="Makita H."/>
            <person name="Sekine M."/>
            <person name="Obayashi M."/>
            <person name="Nishi T."/>
            <person name="Shibahara T."/>
            <person name="Tanaka T."/>
            <person name="Ishii S."/>
            <person name="Yamamoto J."/>
            <person name="Saito K."/>
            <person name="Kawai Y."/>
            <person name="Isono Y."/>
            <person name="Nakamura Y."/>
            <person name="Nagahari K."/>
            <person name="Murakami K."/>
            <person name="Yasuda T."/>
            <person name="Iwayanagi T."/>
            <person name="Wagatsuma M."/>
            <person name="Shiratori A."/>
            <person name="Sudo H."/>
            <person name="Hosoiri T."/>
            <person name="Kaku Y."/>
            <person name="Kodaira H."/>
            <person name="Kondo H."/>
            <person name="Sugawara M."/>
            <person name="Takahashi M."/>
            <person name="Kanda K."/>
            <person name="Yokoi T."/>
            <person name="Furuya T."/>
            <person name="Kikkawa E."/>
            <person name="Omura Y."/>
            <person name="Abe K."/>
            <person name="Kamihara K."/>
            <person name="Katsuta N."/>
            <person name="Sato K."/>
            <person name="Tanikawa M."/>
            <person name="Yamazaki M."/>
            <person name="Ninomiya K."/>
            <person name="Ishibashi T."/>
            <person name="Yamashita H."/>
            <person name="Murakawa K."/>
            <person name="Fujimori K."/>
            <person name="Tanai H."/>
            <person name="Kimata M."/>
            <person name="Watanabe M."/>
            <person name="Hiraoka S."/>
            <person name="Chiba Y."/>
            <person name="Ishida S."/>
            <person name="Ono Y."/>
            <person name="Takiguchi S."/>
            <person name="Watanabe S."/>
            <person name="Yosida M."/>
            <person name="Hotuta T."/>
            <person name="Kusano J."/>
            <person name="Kanehori K."/>
            <person name="Takahashi-Fujii A."/>
            <person name="Hara H."/>
            <person name="Tanase T.-O."/>
            <person name="Nomura Y."/>
            <person name="Togiya S."/>
            <person name="Komai F."/>
            <person name="Hara R."/>
            <person name="Takeuchi K."/>
            <person name="Arita M."/>
            <person name="Imose N."/>
            <person name="Musashino K."/>
            <person name="Yuuki H."/>
            <person name="Oshima A."/>
            <person name="Sasaki N."/>
            <person name="Aotsuka S."/>
            <person name="Yoshikawa Y."/>
            <person name="Matsunawa H."/>
            <person name="Ichihara T."/>
            <person name="Shiohata N."/>
            <person name="Sano S."/>
            <person name="Moriya S."/>
            <person name="Momiyama H."/>
            <person name="Satoh N."/>
            <person name="Takami S."/>
            <person name="Terashima Y."/>
            <person name="Suzuki O."/>
            <person name="Nakagawa S."/>
            <person name="Senoh A."/>
            <person name="Mizoguchi H."/>
            <person name="Goto Y."/>
            <person name="Shimizu F."/>
            <person name="Wakebe H."/>
            <person name="Hishigaki H."/>
            <person name="Watanabe T."/>
            <person name="Sugiyama A."/>
            <person name="Takemoto M."/>
            <person name="Kawakami B."/>
            <person name="Yamazaki M."/>
            <person name="Watanabe K."/>
            <person name="Kumagai A."/>
            <person name="Itakura S."/>
            <person name="Fukuzumi Y."/>
            <person name="Fujimori Y."/>
            <person name="Komiyama M."/>
            <person name="Tashiro H."/>
            <person name="Tanigami A."/>
            <person name="Fujiwara T."/>
            <person name="Ono T."/>
            <person name="Yamada K."/>
            <person name="Fujii Y."/>
            <person name="Ozaki K."/>
            <person name="Hirao M."/>
            <person name="Ohmori Y."/>
            <person name="Kawabata A."/>
            <person name="Hikiji T."/>
            <person name="Kobatake N."/>
            <person name="Inagaki H."/>
            <person name="Ikema Y."/>
            <person name="Okamoto S."/>
            <person name="Okitani R."/>
            <person name="Kawakami T."/>
            <person name="Noguchi S."/>
            <person name="Itoh T."/>
            <person name="Shigeta K."/>
            <person name="Senba T."/>
            <person name="Matsumura K."/>
            <person name="Nakajima Y."/>
            <person name="Mizuno T."/>
            <person name="Morinaga M."/>
            <person name="Sasaki M."/>
            <person name="Togashi T."/>
            <person name="Oyama M."/>
            <person name="Hata H."/>
            <person name="Watanabe M."/>
            <person name="Komatsu T."/>
            <person name="Mizushima-Sugano J."/>
            <person name="Satoh T."/>
            <person name="Shirai Y."/>
            <person name="Takahashi Y."/>
            <person name="Nakagawa K."/>
            <person name="Okumura K."/>
            <person name="Nagase T."/>
            <person name="Nomura N."/>
            <person name="Kikuchi H."/>
            <person name="Masuho Y."/>
            <person name="Yamashita R."/>
            <person name="Nakai K."/>
            <person name="Yada T."/>
            <person name="Nakamura Y."/>
            <person name="Ohara O."/>
            <person name="Isogai T."/>
            <person name="Sugano S."/>
        </authorList>
    </citation>
    <scope>NUCLEOTIDE SEQUENCE [LARGE SCALE MRNA]</scope>
    <source>
        <tissue>Liver</tissue>
    </source>
</reference>
<reference key="6">
    <citation type="journal article" date="2006" name="Nature">
        <title>The DNA sequence and biological annotation of human chromosome 1.</title>
        <authorList>
            <person name="Gregory S.G."/>
            <person name="Barlow K.F."/>
            <person name="McLay K.E."/>
            <person name="Kaul R."/>
            <person name="Swarbreck D."/>
            <person name="Dunham A."/>
            <person name="Scott C.E."/>
            <person name="Howe K.L."/>
            <person name="Woodfine K."/>
            <person name="Spencer C.C.A."/>
            <person name="Jones M.C."/>
            <person name="Gillson C."/>
            <person name="Searle S."/>
            <person name="Zhou Y."/>
            <person name="Kokocinski F."/>
            <person name="McDonald L."/>
            <person name="Evans R."/>
            <person name="Phillips K."/>
            <person name="Atkinson A."/>
            <person name="Cooper R."/>
            <person name="Jones C."/>
            <person name="Hall R.E."/>
            <person name="Andrews T.D."/>
            <person name="Lloyd C."/>
            <person name="Ainscough R."/>
            <person name="Almeida J.P."/>
            <person name="Ambrose K.D."/>
            <person name="Anderson F."/>
            <person name="Andrew R.W."/>
            <person name="Ashwell R.I.S."/>
            <person name="Aubin K."/>
            <person name="Babbage A.K."/>
            <person name="Bagguley C.L."/>
            <person name="Bailey J."/>
            <person name="Beasley H."/>
            <person name="Bethel G."/>
            <person name="Bird C.P."/>
            <person name="Bray-Allen S."/>
            <person name="Brown J.Y."/>
            <person name="Brown A.J."/>
            <person name="Buckley D."/>
            <person name="Burton J."/>
            <person name="Bye J."/>
            <person name="Carder C."/>
            <person name="Chapman J.C."/>
            <person name="Clark S.Y."/>
            <person name="Clarke G."/>
            <person name="Clee C."/>
            <person name="Cobley V."/>
            <person name="Collier R.E."/>
            <person name="Corby N."/>
            <person name="Coville G.J."/>
            <person name="Davies J."/>
            <person name="Deadman R."/>
            <person name="Dunn M."/>
            <person name="Earthrowl M."/>
            <person name="Ellington A.G."/>
            <person name="Errington H."/>
            <person name="Frankish A."/>
            <person name="Frankland J."/>
            <person name="French L."/>
            <person name="Garner P."/>
            <person name="Garnett J."/>
            <person name="Gay L."/>
            <person name="Ghori M.R.J."/>
            <person name="Gibson R."/>
            <person name="Gilby L.M."/>
            <person name="Gillett W."/>
            <person name="Glithero R.J."/>
            <person name="Grafham D.V."/>
            <person name="Griffiths C."/>
            <person name="Griffiths-Jones S."/>
            <person name="Grocock R."/>
            <person name="Hammond S."/>
            <person name="Harrison E.S.I."/>
            <person name="Hart E."/>
            <person name="Haugen E."/>
            <person name="Heath P.D."/>
            <person name="Holmes S."/>
            <person name="Holt K."/>
            <person name="Howden P.J."/>
            <person name="Hunt A.R."/>
            <person name="Hunt S.E."/>
            <person name="Hunter G."/>
            <person name="Isherwood J."/>
            <person name="James R."/>
            <person name="Johnson C."/>
            <person name="Johnson D."/>
            <person name="Joy A."/>
            <person name="Kay M."/>
            <person name="Kershaw J.K."/>
            <person name="Kibukawa M."/>
            <person name="Kimberley A.M."/>
            <person name="King A."/>
            <person name="Knights A.J."/>
            <person name="Lad H."/>
            <person name="Laird G."/>
            <person name="Lawlor S."/>
            <person name="Leongamornlert D.A."/>
            <person name="Lloyd D.M."/>
            <person name="Loveland J."/>
            <person name="Lovell J."/>
            <person name="Lush M.J."/>
            <person name="Lyne R."/>
            <person name="Martin S."/>
            <person name="Mashreghi-Mohammadi M."/>
            <person name="Matthews L."/>
            <person name="Matthews N.S.W."/>
            <person name="McLaren S."/>
            <person name="Milne S."/>
            <person name="Mistry S."/>
            <person name="Moore M.J.F."/>
            <person name="Nickerson T."/>
            <person name="O'Dell C.N."/>
            <person name="Oliver K."/>
            <person name="Palmeiri A."/>
            <person name="Palmer S.A."/>
            <person name="Parker A."/>
            <person name="Patel D."/>
            <person name="Pearce A.V."/>
            <person name="Peck A.I."/>
            <person name="Pelan S."/>
            <person name="Phelps K."/>
            <person name="Phillimore B.J."/>
            <person name="Plumb R."/>
            <person name="Rajan J."/>
            <person name="Raymond C."/>
            <person name="Rouse G."/>
            <person name="Saenphimmachak C."/>
            <person name="Sehra H.K."/>
            <person name="Sheridan E."/>
            <person name="Shownkeen R."/>
            <person name="Sims S."/>
            <person name="Skuce C.D."/>
            <person name="Smith M."/>
            <person name="Steward C."/>
            <person name="Subramanian S."/>
            <person name="Sycamore N."/>
            <person name="Tracey A."/>
            <person name="Tromans A."/>
            <person name="Van Helmond Z."/>
            <person name="Wall M."/>
            <person name="Wallis J.M."/>
            <person name="White S."/>
            <person name="Whitehead S.L."/>
            <person name="Wilkinson J.E."/>
            <person name="Willey D.L."/>
            <person name="Williams H."/>
            <person name="Wilming L."/>
            <person name="Wray P.W."/>
            <person name="Wu Z."/>
            <person name="Coulson A."/>
            <person name="Vaudin M."/>
            <person name="Sulston J.E."/>
            <person name="Durbin R.M."/>
            <person name="Hubbard T."/>
            <person name="Wooster R."/>
            <person name="Dunham I."/>
            <person name="Carter N.P."/>
            <person name="McVean G."/>
            <person name="Ross M.T."/>
            <person name="Harrow J."/>
            <person name="Olson M.V."/>
            <person name="Beck S."/>
            <person name="Rogers J."/>
            <person name="Bentley D.R."/>
        </authorList>
    </citation>
    <scope>NUCLEOTIDE SEQUENCE [LARGE SCALE GENOMIC DNA]</scope>
</reference>
<reference key="7">
    <citation type="submission" date="2005-07" db="EMBL/GenBank/DDBJ databases">
        <authorList>
            <person name="Mural R.J."/>
            <person name="Istrail S."/>
            <person name="Sutton G.G."/>
            <person name="Florea L."/>
            <person name="Halpern A.L."/>
            <person name="Mobarry C.M."/>
            <person name="Lippert R."/>
            <person name="Walenz B."/>
            <person name="Shatkay H."/>
            <person name="Dew I."/>
            <person name="Miller J.R."/>
            <person name="Flanigan M.J."/>
            <person name="Edwards N.J."/>
            <person name="Bolanos R."/>
            <person name="Fasulo D."/>
            <person name="Halldorsson B.V."/>
            <person name="Hannenhalli S."/>
            <person name="Turner R."/>
            <person name="Yooseph S."/>
            <person name="Lu F."/>
            <person name="Nusskern D.R."/>
            <person name="Shue B.C."/>
            <person name="Zheng X.H."/>
            <person name="Zhong F."/>
            <person name="Delcher A.L."/>
            <person name="Huson D.H."/>
            <person name="Kravitz S.A."/>
            <person name="Mouchard L."/>
            <person name="Reinert K."/>
            <person name="Remington K.A."/>
            <person name="Clark A.G."/>
            <person name="Waterman M.S."/>
            <person name="Eichler E.E."/>
            <person name="Adams M.D."/>
            <person name="Hunkapiller M.W."/>
            <person name="Myers E.W."/>
            <person name="Venter J.C."/>
        </authorList>
    </citation>
    <scope>NUCLEOTIDE SEQUENCE [LARGE SCALE GENOMIC DNA]</scope>
</reference>
<reference key="8">
    <citation type="journal article" date="2004" name="Genome Res.">
        <title>The status, quality, and expansion of the NIH full-length cDNA project: the Mammalian Gene Collection (MGC).</title>
        <authorList>
            <consortium name="The MGC Project Team"/>
        </authorList>
    </citation>
    <scope>NUCLEOTIDE SEQUENCE [LARGE SCALE MRNA]</scope>
    <scope>VARIANT MET-257</scope>
    <source>
        <tissue>Brain</tissue>
        <tissue>Lung</tissue>
    </source>
</reference>
<reference key="9">
    <citation type="journal article" date="1997" name="Drug Metab. Dispos.">
        <title>Baculovirus-mediated expression and purification of human FMO3: catalytic, immunochemical, and structural characterization.</title>
        <authorList>
            <person name="Haining R.L."/>
            <person name="Hunter A.P."/>
            <person name="Sadeque A.J."/>
            <person name="Philpot R.M."/>
            <person name="Rettie A.E."/>
        </authorList>
    </citation>
    <scope>PROTEIN SEQUENCE OF 2-10</scope>
    <scope>FUNCTION</scope>
    <scope>IDENTIFICATION BY MASS SPECTROMETRY</scope>
</reference>
<reference key="10">
    <citation type="journal article" date="1998" name="Biochem. Pharmacol.">
        <title>Isoform specificity of trimethylamine N-oxygenation by human flavin-containing monooxygenase (FMO) and P450 enzymes: selective catalysis by FMO3.</title>
        <authorList>
            <person name="Lang D.H."/>
            <person name="Yeung C.K."/>
            <person name="Peter R.M."/>
            <person name="Ibarra C."/>
            <person name="Gasser R."/>
            <person name="Itagaki K."/>
            <person name="Philpot R.M."/>
            <person name="Rettie A.E."/>
        </authorList>
    </citation>
    <scope>FUNCTION</scope>
    <scope>CATALYTIC ACTIVITY</scope>
</reference>
<reference key="11">
    <citation type="journal article" date="1998" name="Hum. Mol. Genet.">
        <title>Mutations of the flavin-containing monooxygenase gene (FMO3) cause trimethylaminuria, a defect in detoxication.</title>
        <authorList>
            <person name="Treacy E.P."/>
            <person name="Akerman B.R."/>
            <person name="Chow L.M.L."/>
            <person name="Youil R."/>
            <person name="Bibeau C."/>
            <person name="Lin J."/>
            <person name="Bruce A.G."/>
            <person name="Knight M."/>
            <person name="Danks D.M."/>
            <person name="Cashman J.R."/>
            <person name="Forrest S.M."/>
        </authorList>
    </citation>
    <scope>CATALYTIC ACTIVITY</scope>
    <scope>VARIANTS TMAU ILE-66 AND LEU-153</scope>
    <scope>VARIANTS LYS-158; MET-257 AND GLY-308</scope>
</reference>
<reference key="12">
    <citation type="journal article" date="2000" name="Br. J. Clin. Pharmacol.">
        <title>Relative contribution of cytochromes P-450 and flavin-containing monooxygenases to the metabolism of albendazole by human liver microsomes.</title>
        <authorList>
            <person name="Rawden H.C."/>
            <person name="Kokwaro G.O."/>
            <person name="Ward S.A."/>
            <person name="Edwards G."/>
        </authorList>
    </citation>
    <scope>FUNCTION</scope>
    <scope>CATALYTIC ACTIVITY</scope>
</reference>
<reference key="13">
    <citation type="journal article" date="2007" name="Arch. Biochem. Biophys.">
        <title>Functional characterization of genetic variants of human FMO3 associated with trimethylaminuria.</title>
        <authorList>
            <person name="Yeung C.K."/>
            <person name="Adman E.T."/>
            <person name="Rettie A.E."/>
        </authorList>
    </citation>
    <scope>BIOPHYSICOCHEMICAL PROPERTIES</scope>
    <scope>CHARACTERIZATION OF VARIANTS TMAU SER-61; ILE-66; LEU-153 AND TRP-492</scope>
    <scope>CHARACTERIZATION OF VARIANTS LYS-158; MET-257 AND GLY-308</scope>
</reference>
<reference key="14">
    <citation type="journal article" date="2014" name="J. Proteomics">
        <title>An enzyme assisted RP-RPLC approach for in-depth analysis of human liver phosphoproteome.</title>
        <authorList>
            <person name="Bian Y."/>
            <person name="Song C."/>
            <person name="Cheng K."/>
            <person name="Dong M."/>
            <person name="Wang F."/>
            <person name="Huang J."/>
            <person name="Sun D."/>
            <person name="Wang L."/>
            <person name="Ye M."/>
            <person name="Zou H."/>
        </authorList>
    </citation>
    <scope>IDENTIFICATION BY MASS SPECTROMETRY [LARGE SCALE ANALYSIS]</scope>
    <source>
        <tissue>Liver</tissue>
    </source>
</reference>
<reference key="15">
    <citation type="journal article" date="2018" name="J. Thromb. Haemost.">
        <title>Flavin monooxygenase 3, the host hepatic enzyme in the metaorganismal trimethylamine N-oxide-generating pathway, modulates platelet responsiveness and thrombosis risk.</title>
        <authorList>
            <person name="Zhu W."/>
            <person name="Buffa J.A."/>
            <person name="Wang Z."/>
            <person name="Warrier M."/>
            <person name="Schugar R."/>
            <person name="Shih D.M."/>
            <person name="Gupta N."/>
            <person name="Gregory J.C."/>
            <person name="Org E."/>
            <person name="Fu X."/>
            <person name="Li L."/>
            <person name="DiDonato J.A."/>
            <person name="Lusis A.J."/>
            <person name="Brown J.M."/>
            <person name="Hazen S.L."/>
        </authorList>
    </citation>
    <scope>FUNCTION</scope>
</reference>
<reference key="16">
    <citation type="journal article" date="2019" name="Cancer Epidemiol. Biomarkers Prev.">
        <title>Nicotine-N'-oxidation by flavin monooxygenase enzymes.</title>
        <authorList>
            <person name="Perez-Paramo Y.X."/>
            <person name="Chen G."/>
            <person name="Ashmore J.H."/>
            <person name="Watson C.J.W."/>
            <person name="Nasrin S."/>
            <person name="Adams-Haduch J."/>
            <person name="Wang R."/>
            <person name="Gao Y.T."/>
            <person name="Koh W.P."/>
            <person name="Yuan J.M."/>
            <person name="Lazarus P."/>
        </authorList>
    </citation>
    <scope>FUNCTION</scope>
    <scope>CATALYTIC ACTIVITY</scope>
</reference>
<reference key="17">
    <citation type="journal article" date="2020" name="Drug Metab. Dispos.">
        <title>Flavin-Containing Monooxygenase 1 Catalyzes the Production of Taurine from Hypotaurine.</title>
        <authorList>
            <person name="Veeravalli S."/>
            <person name="Phillips I.R."/>
            <person name="Freire R.T."/>
            <person name="Varshavi D."/>
            <person name="Everett J.R."/>
            <person name="Shephard E.A."/>
        </authorList>
    </citation>
    <scope>FUNCTION</scope>
    <scope>CATALYTIC ACTIVITY</scope>
</reference>
<reference key="18">
    <citation type="journal article" date="1999" name="Hum. Mutat.">
        <title>Two novel mutations of the FMO3 gene in a proband with trimethylaminuria.</title>
        <authorList>
            <person name="Akerman B.R."/>
            <person name="Forrest S.M."/>
            <person name="Chow L.M.L."/>
            <person name="Youil R."/>
            <person name="Knight M."/>
            <person name="Treacy E.P."/>
        </authorList>
    </citation>
    <scope>VARIANTS TMAU ILE-66 AND TRP-492</scope>
</reference>
<reference key="19">
    <citation type="journal article" date="1999" name="Mol. Genet. Metab.">
        <title>Trimethylaminuria is caused by mutations of the FMO3 gene in a North American cohort.</title>
        <authorList>
            <person name="Akerman B.R."/>
            <person name="Lemass H."/>
            <person name="Chow L.M.L."/>
            <person name="Lambert D.M."/>
            <person name="Greenberg C."/>
            <person name="Bibeau C."/>
            <person name="Mamer O.A."/>
            <person name="Treacy E.P."/>
        </authorList>
    </citation>
    <scope>VARIANTS TMAU THR-52 AND LEU-387</scope>
    <scope>VARIANTS LYS-158 AND GLY-308</scope>
</reference>
<reference key="20">
    <citation type="journal article" date="2000" name="Pharmacogenetics">
        <title>Compound heterozygosity for missense mutations in the flavin-containing monooxygenase 3 (FM03) gene in patients with fish-odour syndrome.</title>
        <authorList>
            <person name="Dolphin C.T."/>
            <person name="Janmohamed A."/>
            <person name="Smith R.L."/>
            <person name="Shephard E.A."/>
            <person name="Phillips I.R."/>
        </authorList>
    </citation>
    <scope>VARIANTS TMAU SER-61; LEU-153; ILE-434 AND TRP-492</scope>
    <scope>CHARACTERIZATION OF VARIANTS TMAU SER-61; LEU-153; ILE-434 AND TRP-492</scope>
</reference>
<reference key="21">
    <citation type="journal article" date="2003" name="Drug Metab. Dispos.">
        <title>Identification of novel variants of the flavin-containing monooxygenase gene family in African Americans.</title>
        <authorList>
            <person name="Furnes B."/>
            <person name="Feng J."/>
            <person name="Sommer S.S."/>
            <person name="Schlenk D."/>
        </authorList>
    </citation>
    <scope>VARIANTS HIS-132; LYS-158; MET-257; PRO-360; GLN-362 AND ARG-503</scope>
</reference>
<reference key="22">
    <citation type="journal article" date="2003" name="Drug Metab. Pharmacokinet.">
        <title>Two novel single nucleotide polymorphisms (SNPs) of the FMO3 gene in Japanese.</title>
        <authorList>
            <person name="Fujieda M."/>
            <person name="Yamazaki H."/>
            <person name="Togashi M."/>
            <person name="Saito T."/>
            <person name="Kamataki T."/>
        </authorList>
    </citation>
    <scope>VARIANTS GLU-198 AND CYS-205</scope>
</reference>
<reference key="23">
    <citation type="journal article" date="2003" name="Pharmacogenetics">
        <title>Deleterious mutations in the flavin-containing monooxygenase 3 (FMO3) gene causing trimethylaminuria.</title>
        <authorList>
            <person name="Zhang J."/>
            <person name="Tran Q."/>
            <person name="Lattard V."/>
            <person name="Cashman J.R."/>
        </authorList>
    </citation>
    <scope>VARIANT TMAU LYS-32</scope>
</reference>
<reference key="24">
    <citation type="journal article" date="2007" name="J. Pharmacol. Exp. Ther.">
        <title>Identification and functional analysis of common human flavin-containing monooxygenase 3 genetic variants.</title>
        <authorList>
            <person name="Koukouritaki S.B."/>
            <person name="Poch M.T."/>
            <person name="Henderson M.C."/>
            <person name="Siddens L.K."/>
            <person name="Krueger S.K."/>
            <person name="VanDyke J.E."/>
            <person name="Williams D.E."/>
            <person name="Pajewski N.M."/>
            <person name="Wang T."/>
            <person name="Hines R.N."/>
        </authorList>
    </citation>
    <scope>VARIANTS ASP-24; LYS-61; LYS-158; MET-257; GLY-308 AND ASN-416</scope>
    <scope>BIOPHYSICOCHEMICAL PROPERTIES</scope>
    <scope>CHARACTERIZATION OF VARIANTS ASP-24; LYS-61 AND ASN-416</scope>
</reference>
<sequence length="532" mass="60033">MGKKVAIIGAGVSGLASIRSCLEEGLEPTCFEKSNDIGGLWKFSDHAEEGRASIYKSVFSNSSKEMMCFPDFPFPDDFPNFMHNSKIQEYIIAFAKEKNLLKYIQFKTFVSSVNKHPDFATTGQWDVTTERDGKKESAVFDAVMVCSGHHVYPNLPKESFPGLNHFKGKCFHSRDYKEPGVFNGKRVLVVGLGNSGCDIATELSRTAEQVMISSRSGSWVMSRVWDNGYPWDMLLVTRFGTFLKNNLPTAISDWLYVKQMNARFKHENYGLMPLNGVLRKEPVFNDELPASILCGIVSVKPNVKEFTETSAIFEDGTIFEGIDCVIFATGYSFAYPFLDESIIKSRNNEIILFKGVFPPLLEKSTIAVIGFVQSLGAAIPTVDLQSRWAAQVIKGTCTLPSMEDMMNDINEKMEKKRKWFGKSETIQTDYIVYMDELSSFIGAKPNIPWLFLTDPKLAMEVYFGPCSPYQFRLVGPGQWPGARNAILTQWDRSLKPMQTRVVGRLQKPCFFFHWLKLFAIPILLIAVFLVLT</sequence>
<comment type="function">
    <text evidence="7 15 16 17 18 20">Essential hepatic enzyme that catalyzes the oxygenation of a wide variety of nitrogen- and sulfur-containing compounds including drugs as well as dietary compounds (PubMed:10759686, PubMed:30381441, PubMed:32156684). Plays an important role in the metabolism of trimethylamine (TMA), via the production of trimethylamine N-oxide (TMAO) metabolite (PubMed:9776311). TMA is generated by the action of gut microbiota using dietary precursors such as choline, choline containing compounds, betaine or L-carnitine. By regulating TMAO concentration, FMO3 directly impacts both platelet responsiveness and rate of thrombus formation (PubMed:29981269).</text>
</comment>
<comment type="catalytic activity">
    <reaction evidence="19 20">
        <text>trimethylamine + NADPH + O2 = trimethylamine N-oxide + NADP(+) + H2O</text>
        <dbReference type="Rhea" id="RHEA:31979"/>
        <dbReference type="ChEBI" id="CHEBI:15377"/>
        <dbReference type="ChEBI" id="CHEBI:15379"/>
        <dbReference type="ChEBI" id="CHEBI:15724"/>
        <dbReference type="ChEBI" id="CHEBI:57783"/>
        <dbReference type="ChEBI" id="CHEBI:58349"/>
        <dbReference type="ChEBI" id="CHEBI:58389"/>
        <dbReference type="EC" id="1.14.13.148"/>
    </reaction>
    <physiologicalReaction direction="left-to-right" evidence="19">
        <dbReference type="Rhea" id="RHEA:31980"/>
    </physiologicalReaction>
</comment>
<comment type="catalytic activity">
    <reaction evidence="19">
        <text>N,N-dimethylaniline + NADPH + O2 + H(+) = N,N-dimethylaniline N-oxide + NADP(+) + H2O</text>
        <dbReference type="Rhea" id="RHEA:24468"/>
        <dbReference type="ChEBI" id="CHEBI:15377"/>
        <dbReference type="ChEBI" id="CHEBI:15378"/>
        <dbReference type="ChEBI" id="CHEBI:15379"/>
        <dbReference type="ChEBI" id="CHEBI:16269"/>
        <dbReference type="ChEBI" id="CHEBI:17735"/>
        <dbReference type="ChEBI" id="CHEBI:57783"/>
        <dbReference type="ChEBI" id="CHEBI:58349"/>
        <dbReference type="EC" id="1.14.13.8"/>
    </reaction>
    <physiologicalReaction direction="left-to-right" evidence="26">
        <dbReference type="Rhea" id="RHEA:24469"/>
    </physiologicalReaction>
</comment>
<comment type="catalytic activity">
    <reaction evidence="17">
        <text>hypotaurine + NADPH + O2 + H(+) = taurine + NADP(+) + H2O</text>
        <dbReference type="Rhea" id="RHEA:69819"/>
        <dbReference type="ChEBI" id="CHEBI:15377"/>
        <dbReference type="ChEBI" id="CHEBI:15378"/>
        <dbReference type="ChEBI" id="CHEBI:15379"/>
        <dbReference type="ChEBI" id="CHEBI:57783"/>
        <dbReference type="ChEBI" id="CHEBI:57853"/>
        <dbReference type="ChEBI" id="CHEBI:58349"/>
        <dbReference type="ChEBI" id="CHEBI:507393"/>
        <dbReference type="EC" id="1.14.13.8"/>
    </reaction>
    <physiologicalReaction direction="left-to-right" evidence="25">
        <dbReference type="Rhea" id="RHEA:69820"/>
    </physiologicalReaction>
</comment>
<comment type="catalytic activity">
    <reaction evidence="16">
        <text>(S)-nicotine + NADPH + O2 = trans-(S)-nicotine N(1')-oxide + NADP(+) + H2O</text>
        <dbReference type="Rhea" id="RHEA:58720"/>
        <dbReference type="ChEBI" id="CHEBI:15377"/>
        <dbReference type="ChEBI" id="CHEBI:15379"/>
        <dbReference type="ChEBI" id="CHEBI:57783"/>
        <dbReference type="ChEBI" id="CHEBI:58349"/>
        <dbReference type="ChEBI" id="CHEBI:59806"/>
        <dbReference type="ChEBI" id="CHEBI:142660"/>
    </reaction>
    <physiologicalReaction direction="left-to-right" evidence="24">
        <dbReference type="Rhea" id="RHEA:58721"/>
    </physiologicalReaction>
</comment>
<comment type="catalytic activity">
    <reaction evidence="7">
        <text>albendazole + NADPH + O2 + H(+) = albendazole S-oxide + NADP(+) + H2O</text>
        <dbReference type="Rhea" id="RHEA:10796"/>
        <dbReference type="ChEBI" id="CHEBI:15377"/>
        <dbReference type="ChEBI" id="CHEBI:15378"/>
        <dbReference type="ChEBI" id="CHEBI:15379"/>
        <dbReference type="ChEBI" id="CHEBI:16664"/>
        <dbReference type="ChEBI" id="CHEBI:16959"/>
        <dbReference type="ChEBI" id="CHEBI:57783"/>
        <dbReference type="ChEBI" id="CHEBI:58349"/>
        <dbReference type="EC" id="1.14.13.32"/>
    </reaction>
    <physiologicalReaction direction="left-to-right" evidence="23">
        <dbReference type="Rhea" id="RHEA:10797"/>
    </physiologicalReaction>
</comment>
<comment type="cofactor">
    <cofactor>
        <name>FAD</name>
        <dbReference type="ChEBI" id="CHEBI:57692"/>
    </cofactor>
</comment>
<comment type="biophysicochemical properties">
    <kinetics>
        <KM evidence="13 14">21 uM for trimethylamine (at pH 8.5)</KM>
        <KM evidence="13 14">31 uM for trimethylamine (at pH 7.4 and 37 degrees Celsius)</KM>
        <KM evidence="13 14">43 uM for benzydamine (at pH 7.4 and 37 degrees Celsius)</KM>
        <KM evidence="13 14">55.7 uM for ethylenethiourea (at pH 8.5)</KM>
        <KM evidence="13 14">71.8 uM for methimazole (at pH 8.5)</KM>
        <KM evidence="13 14">150.1 uM for sulindac (at pH 8.5)</KM>
        <KM evidence="13 14">248 uM for methyl p-tolyl sulfide (at pH 7.4 and 37 degrees Celsius)</KM>
    </kinetics>
</comment>
<comment type="interaction">
    <interactant intactId="EBI-12361463">
        <id>P31513</id>
    </interactant>
    <interactant intactId="EBI-2873246">
        <id>Q8IUN9</id>
        <label>CLEC10A</label>
    </interactant>
    <organismsDiffer>false</organismsDiffer>
    <experiments>3</experiments>
</comment>
<comment type="interaction">
    <interactant intactId="EBI-12361463">
        <id>P31513</id>
    </interactant>
    <interactant intactId="EBI-625022">
        <id>O43889-2</id>
        <label>CREB3</label>
    </interactant>
    <organismsDiffer>false</organismsDiffer>
    <experiments>4</experiments>
</comment>
<comment type="interaction">
    <interactant intactId="EBI-12361463">
        <id>P31513</id>
    </interactant>
    <interactant intactId="EBI-3917235">
        <id>Q9NTJ5</id>
        <label>SACM1L</label>
    </interactant>
    <organismsDiffer>false</organismsDiffer>
    <experiments>3</experiments>
</comment>
<comment type="interaction">
    <interactant intactId="EBI-12361463">
        <id>P31513</id>
    </interactant>
    <interactant intactId="EBI-7362971">
        <id>Q96HU1</id>
        <label>SGSM3</label>
    </interactant>
    <organismsDiffer>false</organismsDiffer>
    <experiments>3</experiments>
</comment>
<comment type="subcellular location">
    <subcellularLocation>
        <location evidence="1">Microsome membrane</location>
        <topology evidence="4">Single-pass membrane protein</topology>
    </subcellularLocation>
    <subcellularLocation>
        <location evidence="1">Endoplasmic reticulum membrane</location>
        <topology evidence="4">Single-pass membrane protein</topology>
    </subcellularLocation>
</comment>
<comment type="tissue specificity">
    <text>Liver.</text>
</comment>
<comment type="disease" evidence="5 6 8 10 14 19">
    <disease id="DI-02389">
        <name>Trimethylaminuria</name>
        <acronym>TMAU</acronym>
        <description>Inborn error of metabolism associated with an offensive body odor and caused by deficiency of FMO-mediated N-oxidation of amino-trimethylamine (TMA) derived from foodstuffs. Affected individuals excrete relatively large amounts of TMA in their urine, sweat, and breath, and exhibit a fishy body odor characteristic of the malodorous free amine.</description>
        <dbReference type="MIM" id="602079"/>
    </disease>
    <text>The disease is caused by variants affecting the gene represented in this entry.</text>
</comment>
<comment type="similarity">
    <text evidence="22">Belongs to the FMO family.</text>
</comment>
<comment type="online information" name="Protein Spotlight">
    <link uri="https://www.proteinspotlight.org/back_issues/149"/>
    <text>A case for discomfort - Issue 149 of June 2013</text>
</comment>
<protein>
    <recommendedName>
        <fullName evidence="23 26">Flavin-containing monooxygenase 3</fullName>
        <ecNumber evidence="19 20">1.14.13.148</ecNumber>
        <ecNumber evidence="7">1.14.13.32</ecNumber>
        <ecNumber evidence="17 19">1.14.13.8</ecNumber>
    </recommendedName>
    <alternativeName>
        <fullName>Dimethylaniline monooxygenase [N-oxide-forming] 3</fullName>
    </alternativeName>
    <alternativeName>
        <fullName>Dimethylaniline oxidase 3</fullName>
    </alternativeName>
    <alternativeName>
        <fullName>FMO II</fullName>
    </alternativeName>
    <alternativeName>
        <fullName>FMO form 2</fullName>
    </alternativeName>
    <alternativeName>
        <fullName>Hepatic flavin-containing monooxygenase 3</fullName>
        <shortName>FMO 3</shortName>
    </alternativeName>
    <alternativeName>
        <fullName>Trimethylamine monooxygenase</fullName>
    </alternativeName>
</protein>
<proteinExistence type="evidence at protein level"/>
<organism>
    <name type="scientific">Homo sapiens</name>
    <name type="common">Human</name>
    <dbReference type="NCBI Taxonomy" id="9606"/>
    <lineage>
        <taxon>Eukaryota</taxon>
        <taxon>Metazoa</taxon>
        <taxon>Chordata</taxon>
        <taxon>Craniata</taxon>
        <taxon>Vertebrata</taxon>
        <taxon>Euteleostomi</taxon>
        <taxon>Mammalia</taxon>
        <taxon>Eutheria</taxon>
        <taxon>Euarchontoglires</taxon>
        <taxon>Primates</taxon>
        <taxon>Haplorrhini</taxon>
        <taxon>Catarrhini</taxon>
        <taxon>Hominidae</taxon>
        <taxon>Homo</taxon>
    </lineage>
</organism>
<evidence type="ECO:0000250" key="1">
    <source>
        <dbReference type="UniProtKB" id="P32417"/>
    </source>
</evidence>
<evidence type="ECO:0000250" key="2">
    <source>
        <dbReference type="UniProtKB" id="P97501"/>
    </source>
</evidence>
<evidence type="ECO:0000250" key="3">
    <source>
        <dbReference type="UniProtKB" id="Q9HFE4"/>
    </source>
</evidence>
<evidence type="ECO:0000255" key="4"/>
<evidence type="ECO:0000269" key="5">
    <source>
    </source>
</evidence>
<evidence type="ECO:0000269" key="6">
    <source>
    </source>
</evidence>
<evidence type="ECO:0000269" key="7">
    <source>
    </source>
</evidence>
<evidence type="ECO:0000269" key="8">
    <source>
    </source>
</evidence>
<evidence type="ECO:0000269" key="9">
    <source>
    </source>
</evidence>
<evidence type="ECO:0000269" key="10">
    <source>
    </source>
</evidence>
<evidence type="ECO:0000269" key="11">
    <source>
    </source>
</evidence>
<evidence type="ECO:0000269" key="12">
    <source>
    </source>
</evidence>
<evidence type="ECO:0000269" key="13">
    <source>
    </source>
</evidence>
<evidence type="ECO:0000269" key="14">
    <source>
    </source>
</evidence>
<evidence type="ECO:0000269" key="15">
    <source>
    </source>
</evidence>
<evidence type="ECO:0000269" key="16">
    <source>
    </source>
</evidence>
<evidence type="ECO:0000269" key="17">
    <source>
    </source>
</evidence>
<evidence type="ECO:0000269" key="18">
    <source>
    </source>
</evidence>
<evidence type="ECO:0000269" key="19">
    <source>
    </source>
</evidence>
<evidence type="ECO:0000269" key="20">
    <source>
    </source>
</evidence>
<evidence type="ECO:0000269" key="21">
    <source ref="4"/>
</evidence>
<evidence type="ECO:0000305" key="22"/>
<evidence type="ECO:0000305" key="23">
    <source>
    </source>
</evidence>
<evidence type="ECO:0000305" key="24">
    <source>
    </source>
</evidence>
<evidence type="ECO:0000305" key="25">
    <source>
    </source>
</evidence>
<evidence type="ECO:0000305" key="26">
    <source>
    </source>
</evidence>
<dbReference type="EC" id="1.14.13.148" evidence="19 20"/>
<dbReference type="EC" id="1.14.13.32" evidence="7"/>
<dbReference type="EC" id="1.14.13.8" evidence="17 19"/>
<dbReference type="EMBL" id="M83772">
    <property type="protein sequence ID" value="AAA86284.1"/>
    <property type="molecule type" value="mRNA"/>
</dbReference>
<dbReference type="EMBL" id="Z47552">
    <property type="protein sequence ID" value="CAA87632.1"/>
    <property type="molecule type" value="mRNA"/>
</dbReference>
<dbReference type="EMBL" id="U39967">
    <property type="protein sequence ID" value="AAC51932.1"/>
    <property type="molecule type" value="Genomic_DNA"/>
</dbReference>
<dbReference type="EMBL" id="U39961">
    <property type="protein sequence ID" value="AAC51932.1"/>
    <property type="status" value="JOINED"/>
    <property type="molecule type" value="Genomic_DNA"/>
</dbReference>
<dbReference type="EMBL" id="U39962">
    <property type="protein sequence ID" value="AAC51932.1"/>
    <property type="status" value="JOINED"/>
    <property type="molecule type" value="Genomic_DNA"/>
</dbReference>
<dbReference type="EMBL" id="U39963">
    <property type="protein sequence ID" value="AAC51932.1"/>
    <property type="status" value="JOINED"/>
    <property type="molecule type" value="Genomic_DNA"/>
</dbReference>
<dbReference type="EMBL" id="U39964">
    <property type="protein sequence ID" value="AAC51932.1"/>
    <property type="status" value="JOINED"/>
    <property type="molecule type" value="Genomic_DNA"/>
</dbReference>
<dbReference type="EMBL" id="U39965">
    <property type="protein sequence ID" value="AAC51932.1"/>
    <property type="status" value="JOINED"/>
    <property type="molecule type" value="Genomic_DNA"/>
</dbReference>
<dbReference type="EMBL" id="U39966">
    <property type="protein sequence ID" value="AAC51932.1"/>
    <property type="status" value="JOINED"/>
    <property type="molecule type" value="Genomic_DNA"/>
</dbReference>
<dbReference type="EMBL" id="AY895830">
    <property type="protein sequence ID" value="AAW65372.1"/>
    <property type="molecule type" value="Genomic_DNA"/>
</dbReference>
<dbReference type="EMBL" id="AK313197">
    <property type="protein sequence ID" value="BAG36013.1"/>
    <property type="molecule type" value="mRNA"/>
</dbReference>
<dbReference type="EMBL" id="AL021026">
    <property type="status" value="NOT_ANNOTATED_CDS"/>
    <property type="molecule type" value="Genomic_DNA"/>
</dbReference>
<dbReference type="EMBL" id="CH471067">
    <property type="protein sequence ID" value="EAW90887.1"/>
    <property type="molecule type" value="Genomic_DNA"/>
</dbReference>
<dbReference type="EMBL" id="BC032016">
    <property type="protein sequence ID" value="AAH32016.1"/>
    <property type="molecule type" value="mRNA"/>
</dbReference>
<dbReference type="CCDS" id="CCDS1292.1"/>
<dbReference type="PIR" id="A38228">
    <property type="entry name" value="A38228"/>
</dbReference>
<dbReference type="PIR" id="S62367">
    <property type="entry name" value="S51130"/>
</dbReference>
<dbReference type="RefSeq" id="NP_001002294.1">
    <property type="nucleotide sequence ID" value="NM_001002294.3"/>
</dbReference>
<dbReference type="RefSeq" id="NP_001306102.1">
    <property type="nucleotide sequence ID" value="NM_001319173.1"/>
</dbReference>
<dbReference type="RefSeq" id="NP_001306103.1">
    <property type="nucleotide sequence ID" value="NM_001319174.1"/>
</dbReference>
<dbReference type="RefSeq" id="NP_008825.4">
    <property type="nucleotide sequence ID" value="NM_006894.5"/>
</dbReference>
<dbReference type="SMR" id="P31513"/>
<dbReference type="BioGRID" id="108615">
    <property type="interactions" value="5"/>
</dbReference>
<dbReference type="FunCoup" id="P31513">
    <property type="interactions" value="122"/>
</dbReference>
<dbReference type="IntAct" id="P31513">
    <property type="interactions" value="5"/>
</dbReference>
<dbReference type="STRING" id="9606.ENSP00000356729"/>
<dbReference type="ChEMBL" id="CHEMBL3430864"/>
<dbReference type="DrugBank" id="DB00918">
    <property type="generic name" value="Almotriptan"/>
</dbReference>
<dbReference type="DrugBank" id="DB00501">
    <property type="generic name" value="Cimetidine"/>
</dbReference>
<dbReference type="DrugBank" id="DB00363">
    <property type="generic name" value="Clozapine"/>
</dbReference>
<dbReference type="DrugBank" id="DB00250">
    <property type="generic name" value="Dapsone"/>
</dbReference>
<dbReference type="DrugBank" id="DB01254">
    <property type="generic name" value="Dasatinib"/>
</dbReference>
<dbReference type="DrugBank" id="DB12500">
    <property type="generic name" value="Fedratinib"/>
</dbReference>
<dbReference type="DrugBank" id="DB12265">
    <property type="generic name" value="Fexinidazole"/>
</dbReference>
<dbReference type="DrugBank" id="DB11886">
    <property type="generic name" value="Infigratinib"/>
</dbReference>
<dbReference type="DrugBank" id="DB00763">
    <property type="generic name" value="Methimazole"/>
</dbReference>
<dbReference type="DrugBank" id="DB11828">
    <property type="generic name" value="Neratinib"/>
</dbReference>
<dbReference type="DrugBank" id="DB00334">
    <property type="generic name" value="Olanzapine"/>
</dbReference>
<dbReference type="DrugBank" id="DB00768">
    <property type="generic name" value="Olopatadine"/>
</dbReference>
<dbReference type="DrugBank" id="DB12278">
    <property type="generic name" value="Propiverine"/>
</dbReference>
<dbReference type="DrugBank" id="DB15305">
    <property type="generic name" value="Risdiplam"/>
</dbReference>
<dbReference type="DrugBank" id="DB00675">
    <property type="generic name" value="Tamoxifen"/>
</dbReference>
<dbReference type="DrugBank" id="DB13609">
    <property type="generic name" value="Umifenovir"/>
</dbReference>
<dbReference type="DrugBank" id="DB05294">
    <property type="generic name" value="Vandetanib"/>
</dbReference>
<dbReference type="DrugBank" id="DB00582">
    <property type="generic name" value="Voriconazole"/>
</dbReference>
<dbReference type="DrugBank" id="DB15357">
    <property type="generic name" value="Xanomeline"/>
</dbReference>
<dbReference type="iPTMnet" id="P31513"/>
<dbReference type="PhosphoSitePlus" id="P31513"/>
<dbReference type="BioMuta" id="FMO3"/>
<dbReference type="DMDM" id="6166183"/>
<dbReference type="MassIVE" id="P31513"/>
<dbReference type="PaxDb" id="9606-ENSP00000356729"/>
<dbReference type="PeptideAtlas" id="P31513"/>
<dbReference type="ProteomicsDB" id="54793"/>
<dbReference type="Antibodypedia" id="2219">
    <property type="antibodies" value="369 antibodies from 32 providers"/>
</dbReference>
<dbReference type="DNASU" id="2328"/>
<dbReference type="Ensembl" id="ENST00000367755.9">
    <property type="protein sequence ID" value="ENSP00000356729.4"/>
    <property type="gene ID" value="ENSG00000007933.13"/>
</dbReference>
<dbReference type="GeneID" id="2328"/>
<dbReference type="KEGG" id="hsa:2328"/>
<dbReference type="MANE-Select" id="ENST00000367755.9">
    <property type="protein sequence ID" value="ENSP00000356729.4"/>
    <property type="RefSeq nucleotide sequence ID" value="NM_001002294.3"/>
    <property type="RefSeq protein sequence ID" value="NP_001002294.1"/>
</dbReference>
<dbReference type="UCSC" id="uc001ghi.3">
    <property type="organism name" value="human"/>
</dbReference>
<dbReference type="AGR" id="HGNC:3771"/>
<dbReference type="CTD" id="2328"/>
<dbReference type="DisGeNET" id="2328"/>
<dbReference type="GeneCards" id="FMO3"/>
<dbReference type="GeneReviews" id="FMO3"/>
<dbReference type="HGNC" id="HGNC:3771">
    <property type="gene designation" value="FMO3"/>
</dbReference>
<dbReference type="HPA" id="ENSG00000007933">
    <property type="expression patterns" value="Tissue enriched (liver)"/>
</dbReference>
<dbReference type="MalaCards" id="FMO3"/>
<dbReference type="MIM" id="136132">
    <property type="type" value="gene"/>
</dbReference>
<dbReference type="MIM" id="602079">
    <property type="type" value="phenotype"/>
</dbReference>
<dbReference type="neXtProt" id="NX_P31513"/>
<dbReference type="OpenTargets" id="ENSG00000007933"/>
<dbReference type="Orphanet" id="468726">
    <property type="disease" value="Severe primary trimethylaminuria"/>
</dbReference>
<dbReference type="PharmGKB" id="PA166"/>
<dbReference type="VEuPathDB" id="HostDB:ENSG00000007933"/>
<dbReference type="eggNOG" id="KOG1399">
    <property type="taxonomic scope" value="Eukaryota"/>
</dbReference>
<dbReference type="GeneTree" id="ENSGT00940000161339"/>
<dbReference type="HOGENOM" id="CLU_006909_8_2_1"/>
<dbReference type="InParanoid" id="P31513"/>
<dbReference type="OMA" id="WFDLQYD"/>
<dbReference type="OrthoDB" id="66881at2759"/>
<dbReference type="PAN-GO" id="P31513">
    <property type="GO annotations" value="1 GO annotation based on evolutionary models"/>
</dbReference>
<dbReference type="PhylomeDB" id="P31513"/>
<dbReference type="TreeFam" id="TF105285"/>
<dbReference type="BioCyc" id="MetaCyc:HS00223-MONOMER"/>
<dbReference type="BRENDA" id="1.14.13.148">
    <property type="organism ID" value="2681"/>
</dbReference>
<dbReference type="BRENDA" id="1.14.13.8">
    <property type="organism ID" value="2681"/>
</dbReference>
<dbReference type="PathwayCommons" id="P31513"/>
<dbReference type="Reactome" id="R-HSA-217271">
    <property type="pathway name" value="FMO oxidises nucleophiles"/>
</dbReference>
<dbReference type="Reactome" id="R-HSA-5579019">
    <property type="pathway name" value="Defective FMO3 causes TMAU"/>
</dbReference>
<dbReference type="SABIO-RK" id="P31513"/>
<dbReference type="SignaLink" id="P31513"/>
<dbReference type="BioGRID-ORCS" id="2328">
    <property type="hits" value="5 hits in 1147 CRISPR screens"/>
</dbReference>
<dbReference type="ChiTaRS" id="FMO3">
    <property type="organism name" value="human"/>
</dbReference>
<dbReference type="GeneWiki" id="Flavin_containing_monooxygenase_3"/>
<dbReference type="GenomeRNAi" id="2328"/>
<dbReference type="Pharos" id="P31513">
    <property type="development level" value="Tbio"/>
</dbReference>
<dbReference type="PRO" id="PR:P31513"/>
<dbReference type="Proteomes" id="UP000005640">
    <property type="component" value="Chromosome 1"/>
</dbReference>
<dbReference type="RNAct" id="P31513">
    <property type="molecule type" value="protein"/>
</dbReference>
<dbReference type="Bgee" id="ENSG00000007933">
    <property type="expression patterns" value="Expressed in right lobe of liver and 122 other cell types or tissues"/>
</dbReference>
<dbReference type="ExpressionAtlas" id="P31513">
    <property type="expression patterns" value="baseline and differential"/>
</dbReference>
<dbReference type="GO" id="GO:0005789">
    <property type="term" value="C:endoplasmic reticulum membrane"/>
    <property type="evidence" value="ECO:0000304"/>
    <property type="project" value="Reactome"/>
</dbReference>
<dbReference type="GO" id="GO:0043231">
    <property type="term" value="C:intracellular membrane-bounded organelle"/>
    <property type="evidence" value="ECO:0000304"/>
    <property type="project" value="ProtInc"/>
</dbReference>
<dbReference type="GO" id="GO:0047638">
    <property type="term" value="F:albendazole monooxygenase activity"/>
    <property type="evidence" value="ECO:0007669"/>
    <property type="project" value="RHEA"/>
</dbReference>
<dbReference type="GO" id="GO:0050660">
    <property type="term" value="F:flavin adenine dinucleotide binding"/>
    <property type="evidence" value="ECO:0007669"/>
    <property type="project" value="InterPro"/>
</dbReference>
<dbReference type="GO" id="GO:0047822">
    <property type="term" value="F:hypotaurine monooxygenase activity"/>
    <property type="evidence" value="ECO:0000314"/>
    <property type="project" value="UniProtKB"/>
</dbReference>
<dbReference type="GO" id="GO:0004499">
    <property type="term" value="F:N,N-dimethylaniline monooxygenase activity"/>
    <property type="evidence" value="ECO:0000318"/>
    <property type="project" value="GO_Central"/>
</dbReference>
<dbReference type="GO" id="GO:0050661">
    <property type="term" value="F:NADP binding"/>
    <property type="evidence" value="ECO:0007669"/>
    <property type="project" value="InterPro"/>
</dbReference>
<dbReference type="GO" id="GO:0034899">
    <property type="term" value="F:trimethylamine monooxygenase activity"/>
    <property type="evidence" value="ECO:0007669"/>
    <property type="project" value="UniProtKB-EC"/>
</dbReference>
<dbReference type="GO" id="GO:0042412">
    <property type="term" value="P:taurine biosynthetic process"/>
    <property type="evidence" value="ECO:0000314"/>
    <property type="project" value="UniProtKB"/>
</dbReference>
<dbReference type="FunFam" id="3.50.50.60:FF:000023">
    <property type="entry name" value="Dimethylaniline monooxygenase [N-oxide-forming]"/>
    <property type="match status" value="1"/>
</dbReference>
<dbReference type="FunFam" id="3.50.50.60:FF:000073">
    <property type="entry name" value="Dimethylaniline monooxygenase [N-oxide-forming]"/>
    <property type="match status" value="1"/>
</dbReference>
<dbReference type="FunFam" id="3.50.50.60:FF:000174">
    <property type="entry name" value="Dimethylaniline monooxygenase [N-oxide-forming]"/>
    <property type="match status" value="1"/>
</dbReference>
<dbReference type="FunFam" id="3.50.50.60:FF:000454">
    <property type="entry name" value="Dimethylaniline monooxygenase [N-oxide-forming]"/>
    <property type="match status" value="1"/>
</dbReference>
<dbReference type="Gene3D" id="3.50.50.60">
    <property type="entry name" value="FAD/NAD(P)-binding domain"/>
    <property type="match status" value="2"/>
</dbReference>
<dbReference type="InterPro" id="IPR036188">
    <property type="entry name" value="FAD/NAD-bd_sf"/>
</dbReference>
<dbReference type="InterPro" id="IPR000960">
    <property type="entry name" value="Flavin_mOase"/>
</dbReference>
<dbReference type="InterPro" id="IPR020946">
    <property type="entry name" value="Flavin_mOase-like"/>
</dbReference>
<dbReference type="InterPro" id="IPR002255">
    <property type="entry name" value="Flavin_mOase_3"/>
</dbReference>
<dbReference type="InterPro" id="IPR050346">
    <property type="entry name" value="FMO-like"/>
</dbReference>
<dbReference type="PANTHER" id="PTHR23023">
    <property type="entry name" value="DIMETHYLANILINE MONOOXYGENASE"/>
    <property type="match status" value="1"/>
</dbReference>
<dbReference type="Pfam" id="PF00743">
    <property type="entry name" value="FMO-like"/>
    <property type="match status" value="1"/>
</dbReference>
<dbReference type="PIRSF" id="PIRSF000332">
    <property type="entry name" value="FMO"/>
    <property type="match status" value="1"/>
</dbReference>
<dbReference type="PRINTS" id="PR00370">
    <property type="entry name" value="FMOXYGENASE"/>
</dbReference>
<dbReference type="PRINTS" id="PR01123">
    <property type="entry name" value="FMOXYGENASE3"/>
</dbReference>
<dbReference type="SUPFAM" id="SSF51905">
    <property type="entry name" value="FAD/NAD(P)-binding domain"/>
    <property type="match status" value="2"/>
</dbReference>
<name>FMO3_HUMAN</name>
<accession>P31513</accession>
<accession>B2R816</accession>
<accession>Q14854</accession>
<accession>Q8N5N5</accession>
<gene>
    <name type="primary">FMO3</name>
</gene>
<feature type="initiator methionine" description="Removed" evidence="18">
    <location>
        <position position="1"/>
    </location>
</feature>
<feature type="chain" id="PRO_0000147654" description="Flavin-containing monooxygenase 3">
    <location>
        <begin position="2"/>
        <end position="532"/>
    </location>
</feature>
<feature type="transmembrane region" description="Helical" evidence="4">
    <location>
        <begin position="510"/>
        <end position="530"/>
    </location>
</feature>
<feature type="binding site" evidence="3">
    <location>
        <begin position="9"/>
        <end position="13"/>
    </location>
    <ligand>
        <name>FAD</name>
        <dbReference type="ChEBI" id="CHEBI:57692"/>
    </ligand>
</feature>
<feature type="binding site" evidence="3">
    <location>
        <position position="32"/>
    </location>
    <ligand>
        <name>FAD</name>
        <dbReference type="ChEBI" id="CHEBI:57692"/>
    </ligand>
</feature>
<feature type="binding site" evidence="3">
    <location>
        <begin position="40"/>
        <end position="41"/>
    </location>
    <ligand>
        <name>FAD</name>
        <dbReference type="ChEBI" id="CHEBI:57692"/>
    </ligand>
</feature>
<feature type="binding site" evidence="3">
    <location>
        <begin position="60"/>
        <end position="61"/>
    </location>
    <ligand>
        <name>NADP(+)</name>
        <dbReference type="ChEBI" id="CHEBI:58349"/>
    </ligand>
</feature>
<feature type="binding site" evidence="3">
    <location>
        <begin position="61"/>
        <end position="62"/>
    </location>
    <ligand>
        <name>FAD</name>
        <dbReference type="ChEBI" id="CHEBI:57692"/>
    </ligand>
</feature>
<feature type="binding site" evidence="3">
    <location>
        <begin position="195"/>
        <end position="198"/>
    </location>
    <ligand>
        <name>NADP(+)</name>
        <dbReference type="ChEBI" id="CHEBI:58349"/>
    </ligand>
</feature>
<feature type="modified residue" description="Phosphoserine" evidence="2">
    <location>
        <position position="401"/>
    </location>
</feature>
<feature type="sequence variant" id="VAR_042705" description="Modest increase in catalytic efficiency toward trimethylamine, methimazole, ethylenethiourea and sulindac." evidence="13">
    <original>E</original>
    <variation>D</variation>
    <location>
        <position position="24"/>
    </location>
</feature>
<feature type="sequence variant" id="VAR_037306" description="In TMAU; dbSNP:rs72549320." evidence="10">
    <original>E</original>
    <variation>K</variation>
    <location>
        <position position="32"/>
    </location>
</feature>
<feature type="sequence variant" id="VAR_008146" description="In TMAU; dbSNP:rs72549321." evidence="6">
    <original>A</original>
    <variation>T</variation>
    <location>
        <position position="52"/>
    </location>
</feature>
<feature type="sequence variant" id="VAR_042706" description="Loss of activity." evidence="13">
    <original>N</original>
    <variation>K</variation>
    <location>
        <position position="61"/>
    </location>
</feature>
<feature type="sequence variant" id="VAR_037307" description="In TMAU; more than 90% reduction in catalytic efficiency toward trimethylamine, benzydamine and methyl p-tolyl sulfide; dbSNP:rs72549322." evidence="8 14">
    <original>N</original>
    <variation>S</variation>
    <location>
        <position position="61"/>
    </location>
</feature>
<feature type="sequence variant" id="VAR_002423" description="In TMAU; loss of activity; affects FAD binding; dbSNP:rs72549323." evidence="5 14 19">
    <original>M</original>
    <variation>I</variation>
    <location>
        <position position="66"/>
    </location>
</feature>
<feature type="sequence variant" id="VAR_015364" description="In dbSNP:rs12072582." evidence="9 21">
    <original>D</original>
    <variation>H</variation>
    <location>
        <position position="132"/>
    </location>
</feature>
<feature type="sequence variant" id="VAR_002424" description="In TMAU; 90% reduction in catalytic efficiency toward trimethylamine and benzydamine; 34% reduction in catalytic efficiency toward methyl p-tolyl sulfide; nearly no effect on affinity for these substrates; dbSNP:rs72549326." evidence="8 14 19">
    <original>P</original>
    <variation>L</variation>
    <location>
        <position position="153"/>
    </location>
</feature>
<feature type="sequence variant" id="VAR_002425" description="35%, 45% and 71% increase in catalytic efficiency toward trimethylamine, benzydamine and methyl p-tolyl sulfide, respectively; dbSNP:rs2266782." evidence="6 9 13 14 19 21">
    <original>E</original>
    <variation>K</variation>
    <location>
        <position position="158"/>
    </location>
</feature>
<feature type="sequence variant" id="VAR_018345" description="In dbSNP:rs529940450." evidence="12">
    <original>D</original>
    <variation>E</variation>
    <location>
        <position position="198"/>
    </location>
</feature>
<feature type="sequence variant" id="VAR_018346" description="In dbSNP:rs28363549." evidence="12 21">
    <original>R</original>
    <variation>C</variation>
    <location>
        <position position="205"/>
    </location>
</feature>
<feature type="sequence variant" id="VAR_002426" description="65% increase in catalytic efficiency toward trimethylamine and 60% reduction toward benzydamine and methyl p-tolyl sulfide; dbSNP:rs1736557." evidence="9 11 13 14 19 21">
    <original>V</original>
    <variation>M</variation>
    <location>
        <position position="257"/>
    </location>
</feature>
<feature type="sequence variant" id="VAR_014845" description="In dbSNP:rs2066530." evidence="21">
    <original>V</original>
    <variation>A</variation>
    <location>
        <position position="277"/>
    </location>
</feature>
<feature type="sequence variant" id="VAR_002427" description="16% reduction in catalytic efficiency toward trimethylamine and 40% increase toward benzydamine and methyl p-tolyl sulfide; dbSNP:rs2266780." evidence="6 13 14 19 21">
    <original>E</original>
    <variation>G</variation>
    <location>
        <position position="308"/>
    </location>
</feature>
<feature type="sequence variant" id="VAR_015365" description="In dbSNP:rs28363581." evidence="9 21">
    <original>L</original>
    <variation>P</variation>
    <location>
        <position position="360"/>
    </location>
</feature>
<feature type="sequence variant" id="VAR_014846" description="In dbSNP:rs2066532." evidence="9 21">
    <original>E</original>
    <variation>Q</variation>
    <location>
        <position position="362"/>
    </location>
</feature>
<feature type="sequence variant" id="VAR_008147" description="In TMAU; dbSNP:rs72549331." evidence="6">
    <original>R</original>
    <variation>L</variation>
    <location>
        <position position="387"/>
    </location>
</feature>
<feature type="sequence variant" id="VAR_042707" description="2-fold decrease in affinity for trimethylamine; 3-fold decrease in catalytic efficiency toward methimazole; 3-fold increase in catalytic efficiency toward sulindac; 30% increase in catalytic efficiency toward ethylenethiourea; dbSNP:rs774785217." evidence="13">
    <original>K</original>
    <variation>N</variation>
    <location>
        <position position="416"/>
    </location>
</feature>
<feature type="sequence variant" id="VAR_037308" description="In TMAU; profoundly alters enzyme function; dbSNP:rs72549332." evidence="8">
    <original>M</original>
    <variation>I</variation>
    <location>
        <position position="434"/>
    </location>
</feature>
<feature type="sequence variant" id="VAR_008145" description="In TMAU; loss of activity; affects FAD binding; dbSNP:rs72549334." evidence="5 8 14">
    <original>R</original>
    <variation>W</variation>
    <location>
        <position position="492"/>
    </location>
</feature>
<feature type="sequence variant" id="VAR_015366" description="In dbSNP:rs72549335." evidence="9">
    <original>G</original>
    <variation>R</variation>
    <location>
        <position position="503"/>
    </location>
</feature>
<feature type="sequence conflict" description="In Ref. 1; AAA86284." evidence="22" ref="1">
    <original>S</original>
    <variation>T</variation>
    <location>
        <position position="298"/>
    </location>
</feature>
<feature type="sequence conflict" description="In Ref. 1; AAA86284." evidence="22" ref="1">
    <original>I</original>
    <variation>L</variation>
    <location>
        <position position="369"/>
    </location>
</feature>
<feature type="sequence conflict" description="In Ref. 1; AAA86284." evidence="22" ref="1">
    <original>PSMEDM</original>
    <variation>GPFYGKTL</variation>
    <location>
        <begin position="400"/>
        <end position="405"/>
    </location>
</feature>
<feature type="sequence conflict" description="In Ref. 1; AAA86284." evidence="22" ref="1">
    <original>N</original>
    <variation>I</variation>
    <location>
        <position position="410"/>
    </location>
</feature>
<feature type="sequence conflict" description="In Ref. 1; AAA86284." evidence="22" ref="1">
    <original>KW</original>
    <variation>ANG</variation>
    <location>
        <begin position="418"/>
        <end position="419"/>
    </location>
</feature>
<feature type="sequence conflict" description="In Ref. 1; AAA86284." evidence="22" ref="1">
    <original>KP</original>
    <variation>T</variation>
    <location>
        <begin position="444"/>
        <end position="445"/>
    </location>
</feature>
<feature type="sequence conflict" description="In Ref. 1; AAA86284." evidence="22" ref="1">
    <original>W</original>
    <variation>M</variation>
    <location>
        <position position="449"/>
    </location>
</feature>
<feature type="sequence conflict" description="In Ref. 1; AAA86284." evidence="22" ref="1">
    <original>D</original>
    <variation>G</variation>
    <location>
        <position position="454"/>
    </location>
</feature>
<feature type="sequence conflict" description="In Ref. 1; AAA86284." evidence="22" ref="1">
    <original>VY</original>
    <variation>L</variation>
    <location>
        <begin position="461"/>
        <end position="462"/>
    </location>
</feature>
<feature type="sequence conflict" description="In Ref. 1; AAA86284." evidence="22" ref="1">
    <original>Q</original>
    <variation>S</variation>
    <location>
        <position position="478"/>
    </location>
</feature>
<feature type="sequence conflict" description="In Ref. 2; CAA87632." evidence="22" ref="2">
    <original>I</original>
    <variation>M</variation>
    <location>
        <position position="486"/>
    </location>
</feature>